<gene>
    <name type="primary">Repin1</name>
    <name type="synonym">Zfp464</name>
</gene>
<name>REPI1_MOUSE</name>
<reference key="1">
    <citation type="journal article" date="2002" name="Nature">
        <title>Analysis of the mouse transcriptome based on functional annotation of 60,770 full-length cDNAs.</title>
        <authorList>
            <person name="Okazaki Y."/>
            <person name="Furuno M."/>
            <person name="Kasukawa T."/>
            <person name="Adachi J."/>
            <person name="Bono H."/>
            <person name="Kondo S."/>
            <person name="Nikaido I."/>
            <person name="Osato N."/>
            <person name="Saito R."/>
            <person name="Suzuki H."/>
            <person name="Yamanaka I."/>
            <person name="Kiyosawa H."/>
            <person name="Yagi K."/>
            <person name="Tomaru Y."/>
            <person name="Hasegawa Y."/>
            <person name="Nogami A."/>
            <person name="Schonbach C."/>
            <person name="Gojobori T."/>
            <person name="Baldarelli R."/>
            <person name="Hill D.P."/>
            <person name="Bult C."/>
            <person name="Hume D.A."/>
            <person name="Quackenbush J."/>
            <person name="Schriml L.M."/>
            <person name="Kanapin A."/>
            <person name="Matsuda H."/>
            <person name="Batalov S."/>
            <person name="Beisel K.W."/>
            <person name="Blake J.A."/>
            <person name="Bradt D."/>
            <person name="Brusic V."/>
            <person name="Chothia C."/>
            <person name="Corbani L.E."/>
            <person name="Cousins S."/>
            <person name="Dalla E."/>
            <person name="Dragani T.A."/>
            <person name="Fletcher C.F."/>
            <person name="Forrest A."/>
            <person name="Frazer K.S."/>
            <person name="Gaasterland T."/>
            <person name="Gariboldi M."/>
            <person name="Gissi C."/>
            <person name="Godzik A."/>
            <person name="Gough J."/>
            <person name="Grimmond S."/>
            <person name="Gustincich S."/>
            <person name="Hirokawa N."/>
            <person name="Jackson I.J."/>
            <person name="Jarvis E.D."/>
            <person name="Kanai A."/>
            <person name="Kawaji H."/>
            <person name="Kawasawa Y."/>
            <person name="Kedzierski R.M."/>
            <person name="King B.L."/>
            <person name="Konagaya A."/>
            <person name="Kurochkin I.V."/>
            <person name="Lee Y."/>
            <person name="Lenhard B."/>
            <person name="Lyons P.A."/>
            <person name="Maglott D.R."/>
            <person name="Maltais L."/>
            <person name="Marchionni L."/>
            <person name="McKenzie L."/>
            <person name="Miki H."/>
            <person name="Nagashima T."/>
            <person name="Numata K."/>
            <person name="Okido T."/>
            <person name="Pavan W.J."/>
            <person name="Pertea G."/>
            <person name="Pesole G."/>
            <person name="Petrovsky N."/>
            <person name="Pillai R."/>
            <person name="Pontius J.U."/>
            <person name="Qi D."/>
            <person name="Ramachandran S."/>
            <person name="Ravasi T."/>
            <person name="Reed J.C."/>
            <person name="Reed D.J."/>
            <person name="Reid J."/>
            <person name="Ring B.Z."/>
            <person name="Ringwald M."/>
            <person name="Sandelin A."/>
            <person name="Schneider C."/>
            <person name="Semple C.A."/>
            <person name="Setou M."/>
            <person name="Shimada K."/>
            <person name="Sultana R."/>
            <person name="Takenaka Y."/>
            <person name="Taylor M.S."/>
            <person name="Teasdale R.D."/>
            <person name="Tomita M."/>
            <person name="Verardo R."/>
            <person name="Wagner L."/>
            <person name="Wahlestedt C."/>
            <person name="Wang Y."/>
            <person name="Watanabe Y."/>
            <person name="Wells C."/>
            <person name="Wilming L.G."/>
            <person name="Wynshaw-Boris A."/>
            <person name="Yanagisawa M."/>
            <person name="Yang I."/>
            <person name="Yang L."/>
            <person name="Yuan Z."/>
            <person name="Zavolan M."/>
            <person name="Zhu Y."/>
            <person name="Zimmer A."/>
            <person name="Carninci P."/>
            <person name="Hayatsu N."/>
            <person name="Hirozane-Kishikawa T."/>
            <person name="Konno H."/>
            <person name="Nakamura M."/>
            <person name="Sakazume N."/>
            <person name="Sato K."/>
            <person name="Shiraki T."/>
            <person name="Waki K."/>
            <person name="Kawai J."/>
            <person name="Aizawa K."/>
            <person name="Arakawa T."/>
            <person name="Fukuda S."/>
            <person name="Hara A."/>
            <person name="Hashizume W."/>
            <person name="Imotani K."/>
            <person name="Ishii Y."/>
            <person name="Itoh M."/>
            <person name="Kagawa I."/>
            <person name="Miyazaki A."/>
            <person name="Sakai K."/>
            <person name="Sasaki D."/>
            <person name="Shibata K."/>
            <person name="Shinagawa A."/>
            <person name="Yasunishi A."/>
            <person name="Yoshino M."/>
            <person name="Waterston R."/>
            <person name="Lander E.S."/>
            <person name="Rogers J."/>
            <person name="Birney E."/>
            <person name="Hayashizaki Y."/>
        </authorList>
    </citation>
    <scope>NUCLEOTIDE SEQUENCE [LARGE SCALE MRNA]</scope>
    <source>
        <strain>NOD</strain>
        <tissue>Thymus</tissue>
    </source>
</reference>
<reference key="2">
    <citation type="journal article" date="2004" name="Genome Res.">
        <title>The status, quality, and expansion of the NIH full-length cDNA project: the Mammalian Gene Collection (MGC).</title>
        <authorList>
            <consortium name="The MGC Project Team"/>
        </authorList>
    </citation>
    <scope>NUCLEOTIDE SEQUENCE [LARGE SCALE MRNA]</scope>
    <source>
        <strain>C57BL/6J</strain>
        <tissue>Brain</tissue>
    </source>
</reference>
<reference key="3">
    <citation type="journal article" date="2013" name="Mol. Cell">
        <title>SIRT5-mediated lysine desuccinylation impacts diverse metabolic pathways.</title>
        <authorList>
            <person name="Park J."/>
            <person name="Chen Y."/>
            <person name="Tishkoff D.X."/>
            <person name="Peng C."/>
            <person name="Tan M."/>
            <person name="Dai L."/>
            <person name="Xie Z."/>
            <person name="Zhang Y."/>
            <person name="Zwaans B.M."/>
            <person name="Skinner M.E."/>
            <person name="Lombard D.B."/>
            <person name="Zhao Y."/>
        </authorList>
    </citation>
    <scope>ACETYLATION [LARGE SCALE ANALYSIS] AT LYS-39</scope>
    <scope>IDENTIFICATION BY MASS SPECTROMETRY [LARGE SCALE ANALYSIS]</scope>
    <source>
        <tissue>Embryonic fibroblast</tissue>
    </source>
</reference>
<reference key="4">
    <citation type="journal article" date="2010" name="Biochem. Biophys. Res. Commun.">
        <title>Repin1 maybe involved in the regulation of cell size and glucose transport in adipocytes.</title>
        <authorList>
            <person name="Ruschke K."/>
            <person name="Illes M."/>
            <person name="Kern M."/>
            <person name="Kloeting I."/>
            <person name="Fasshauer M."/>
            <person name="Schoen M.R."/>
            <person name="Kosacka J."/>
            <person name="Fitzl G."/>
            <person name="Kovacs P."/>
            <person name="Stumvoll M."/>
            <person name="Blueher M."/>
            <person name="Kloeting N."/>
        </authorList>
    </citation>
    <scope>FUNCTION</scope>
    <scope>SUBCELLULAR LOCATION</scope>
</reference>
<reference key="5">
    <citation type="journal article" date="2014" name="Diabetes">
        <title>Liver-restricted Repin1 deficiency improves whole-body insulin sensitivity, alters lipid metabolism, and causes secondary changes in adipose tissue in mice.</title>
        <authorList>
            <person name="Kern M."/>
            <person name="Kosacka J."/>
            <person name="Hesselbarth N."/>
            <person name="Brueckner J."/>
            <person name="Heiker J.T."/>
            <person name="Flehmig G."/>
            <person name="Kloeting I."/>
            <person name="Kovacs P."/>
            <person name="Matz-Soja M."/>
            <person name="Gebhardt R."/>
            <person name="Krohn K."/>
            <person name="Sales S."/>
            <person name="Abshagen K."/>
            <person name="Shevchenko A."/>
            <person name="Stumvoll M."/>
            <person name="Blueher M."/>
            <person name="Kloeting N."/>
        </authorList>
    </citation>
    <scope>FUNCTION</scope>
    <scope>DISRUPTION PHENOTYPE</scope>
</reference>
<reference key="6">
    <citation type="journal article" date="2016" name="Biochem. Biophys. Res. Commun.">
        <title>Repin1 deficiency improves insulin sensitivity and glucose metabolism in db/db mice by reducing adipose tissue mass and inflammation.</title>
        <authorList>
            <person name="Kunath A."/>
            <person name="Hesselbarth N."/>
            <person name="Gericke M."/>
            <person name="Kern M."/>
            <person name="Dommel S."/>
            <person name="Kovacs P."/>
            <person name="Stumvoll M."/>
            <person name="Blueher M."/>
            <person name="Kloeting N."/>
        </authorList>
    </citation>
    <scope>DISRUPTION PHENOTYPE</scope>
</reference>
<reference key="7">
    <citation type="journal article" date="2017" name="Int. J. Obes. Relat. Metab. Disord.">
        <title>Repin1 deficiency in adipose tissue improves whole-body insulin sensitivity, and lipid metabolism.</title>
        <authorList>
            <person name="Hesselbarth N."/>
            <person name="Kunath A."/>
            <person name="Kern M."/>
            <person name="Gericke M."/>
            <person name="Mejhert N."/>
            <person name="Ryden M."/>
            <person name="Stumvoll M."/>
            <person name="Blueher M."/>
            <person name="Kloeting N."/>
        </authorList>
    </citation>
    <scope>FUNCTION</scope>
    <scope>DISRUPTION PHENOTYPE</scope>
</reference>
<reference key="8">
    <citation type="journal article" date="2018" name="Sci. Rep.">
        <title>Liver-specific Repin1 deficiency impairs transient hepatic steatosis in liver regeneration.</title>
        <authorList>
            <person name="Abshagen K."/>
            <person name="Degenhardt B."/>
            <person name="Liebig M."/>
            <person name="Wendt A."/>
            <person name="Genz B."/>
            <person name="Schaeper U."/>
            <person name="Stumvoll M."/>
            <person name="Hofmann U."/>
            <person name="Frank M."/>
            <person name="Vollmar B."/>
            <person name="Kloeting N."/>
        </authorList>
    </citation>
    <scope>FUNCTION</scope>
    <scope>DISRUPTION PHENOTYPE</scope>
</reference>
<reference key="9">
    <citation type="journal article" date="2019" name="J. Adv. Res.">
        <title>Repin1 deficiency in liver tissue alleviates NAFLD progression in mice.</title>
        <authorList>
            <person name="Abshagen K."/>
            <person name="Mense L."/>
            <person name="Fischer F."/>
            <person name="Liebig M."/>
            <person name="Schaeper U."/>
            <person name="Navarro G."/>
            <person name="Glass A."/>
            <person name="Frank M."/>
            <person name="Kloeting N."/>
            <person name="Vollmar B."/>
        </authorList>
    </citation>
    <scope>FUNCTION</scope>
    <scope>DISRUPTION PHENOTYPE</scope>
</reference>
<reference key="10">
    <citation type="journal article" date="2023" name="Cell Death Dis.">
        <title>REPIN1 regulates iron metabolism and osteoblast apoptosis in osteoporosis.</title>
        <authorList>
            <person name="Xia Y."/>
            <person name="Ge G."/>
            <person name="Xiao H."/>
            <person name="Wu M."/>
            <person name="Wang T."/>
            <person name="Gu C."/>
            <person name="Yang H."/>
            <person name="Geng D."/>
        </authorList>
    </citation>
    <scope>FUNCTION</scope>
    <scope>INDUCTION</scope>
    <scope>DISRUPTION PHENOTYPE</scope>
</reference>
<comment type="function">
    <text evidence="1 4 5 7 8 9 10">Sequence-specific double-stranded DNA-binding protein. Binds ATT-rich and T-rich DNA sequences and facilitates DNA bending (By similarity). May regulate the expression of genes involved in cellular fatty acid import, including SCARB1/CD36, and genes involved in lipid droplet formation (PubMed:20727851, PubMed:24760138, PubMed:28736440, PubMed:30442920, PubMed:30899593). May regulate the expression of LCN2, and thereby influence iron metabolism and apoptosis-related pathways (PubMed:24760138, PubMed:28736440, PubMed:37749079). May regulate the expression of genes involved in glucose transport (PubMed:20727851, PubMed:24760138).</text>
</comment>
<comment type="subunit">
    <text evidence="1">Homodimers and homomultimers. Found in a complex with RIP60 and RIP100.</text>
</comment>
<comment type="subcellular location">
    <subcellularLocation>
        <location evidence="4">Nucleus</location>
    </subcellularLocation>
    <subcellularLocation>
        <location evidence="4">Cytoplasm</location>
        <location evidence="4">Cytosol</location>
    </subcellularLocation>
</comment>
<comment type="induction">
    <text evidence="10">Increased in bone tissue of an iron-overload-induced and in an ovariectomy-induced mouse model of osteoporosis (at protein level).</text>
</comment>
<comment type="disruption phenotype">
    <text evidence="5 6 7 8 9 10">Conditional knockdown in the whole animal, the liver, or in adipose tissue leads to a reduction in body weight and body fat mass despite normal food intake; animals exhibit an increased insulin sensitivity (PubMed:24760138, PubMed:27402271, PubMed:28736440). Furthermore, conditional knockdown in the whole animal leads to reduced levels of inflammatory infiltrates in adipose tissue, conditional knockdown in adipose tissue leads to a reduction in adipocyte size and higher oxygen consumption, and conditional knockdown in the liver leads to higher oxygen consumption and activity, a reduction in liver triacylglycerol levels and adipocyte size (PubMed:24760138, PubMed:27402271, PubMed:28736440). In a mouse model of non-alcoholic fatty liver disease (NAFLD) induced by streptozotocin and a high fat diet, siRNA-mediated knockdown or conditional knockdown in the liver reduces systemic and hepatic lipid accumulation, chronic inflammation, liver injury and decreases risk of tumor formation (PubMed:30899593). In a mouse model of liver regeneration stimulated by a partial hepatectomy, conditional knockdown in the liver reduces the fat content of hepatocytes and impairs glycogen replenishment in liver tissue (PubMed:30442920). In an iron-overload-induced and in an ovariectomy-induced mouse model of osteoporosis, shRNA-mediated knockdown of the protein reduces bone loss (PubMed:37749079).</text>
</comment>
<comment type="caution">
    <text evidence="11">Was believed to function in chromosomal DNA replication initiation, later studies however do not corroborate this theory.</text>
</comment>
<comment type="sequence caution" evidence="11">
    <conflict type="frameshift">
        <sequence resource="EMBL-CDS" id="BAC40716"/>
    </conflict>
</comment>
<proteinExistence type="evidence at protein level"/>
<evidence type="ECO:0000250" key="1">
    <source>
        <dbReference type="UniProtKB" id="Q9BWE0"/>
    </source>
</evidence>
<evidence type="ECO:0000255" key="2">
    <source>
        <dbReference type="PROSITE-ProRule" id="PRU00042"/>
    </source>
</evidence>
<evidence type="ECO:0000256" key="3">
    <source>
        <dbReference type="SAM" id="MobiDB-lite"/>
    </source>
</evidence>
<evidence type="ECO:0000269" key="4">
    <source>
    </source>
</evidence>
<evidence type="ECO:0000269" key="5">
    <source>
    </source>
</evidence>
<evidence type="ECO:0000269" key="6">
    <source>
    </source>
</evidence>
<evidence type="ECO:0000269" key="7">
    <source>
    </source>
</evidence>
<evidence type="ECO:0000269" key="8">
    <source>
    </source>
</evidence>
<evidence type="ECO:0000269" key="9">
    <source>
    </source>
</evidence>
<evidence type="ECO:0000269" key="10">
    <source>
    </source>
</evidence>
<evidence type="ECO:0000305" key="11"/>
<evidence type="ECO:0007744" key="12">
    <source>
    </source>
</evidence>
<dbReference type="EMBL" id="AK089041">
    <property type="protein sequence ID" value="BAC40716.1"/>
    <property type="status" value="ALT_FRAME"/>
    <property type="molecule type" value="mRNA"/>
</dbReference>
<dbReference type="EMBL" id="BC085128">
    <property type="protein sequence ID" value="AAH85128.1"/>
    <property type="molecule type" value="mRNA"/>
</dbReference>
<dbReference type="CCDS" id="CCDS39480.1"/>
<dbReference type="RefSeq" id="NP_001073370.2">
    <property type="nucleotide sequence ID" value="NM_001079901.1"/>
</dbReference>
<dbReference type="RefSeq" id="NP_001073371.2">
    <property type="nucleotide sequence ID" value="NM_001079902.1"/>
</dbReference>
<dbReference type="RefSeq" id="NP_001073372.2">
    <property type="nucleotide sequence ID" value="NM_001079903.1"/>
</dbReference>
<dbReference type="RefSeq" id="NP_001073373.2">
    <property type="nucleotide sequence ID" value="NM_001079904.1"/>
</dbReference>
<dbReference type="RefSeq" id="NP_001073374.1">
    <property type="nucleotide sequence ID" value="NM_001079905.1"/>
</dbReference>
<dbReference type="RefSeq" id="NP_780308.2">
    <property type="nucleotide sequence ID" value="NM_175099.3"/>
</dbReference>
<dbReference type="SMR" id="Q5U4E2"/>
<dbReference type="FunCoup" id="Q5U4E2">
    <property type="interactions" value="80"/>
</dbReference>
<dbReference type="STRING" id="10090.ENSMUSP00000118890"/>
<dbReference type="iPTMnet" id="Q5U4E2"/>
<dbReference type="PhosphoSitePlus" id="Q5U4E2"/>
<dbReference type="PaxDb" id="10090-ENSMUSP00000113548"/>
<dbReference type="PeptideAtlas" id="Q5U4E2"/>
<dbReference type="ProteomicsDB" id="253211"/>
<dbReference type="Pumba" id="Q5U4E2"/>
<dbReference type="Antibodypedia" id="32865">
    <property type="antibodies" value="67 antibodies from 18 providers"/>
</dbReference>
<dbReference type="DNASU" id="58887"/>
<dbReference type="Ensembl" id="ENSMUST00000009420.15">
    <property type="protein sequence ID" value="ENSMUSP00000009420.9"/>
    <property type="gene ID" value="ENSMUSG00000052751.17"/>
</dbReference>
<dbReference type="Ensembl" id="ENSMUST00000163452.7">
    <property type="protein sequence ID" value="ENSMUSP00000132365.2"/>
    <property type="gene ID" value="ENSMUSG00000052751.17"/>
</dbReference>
<dbReference type="GeneID" id="58887"/>
<dbReference type="KEGG" id="mmu:58887"/>
<dbReference type="UCSC" id="uc009buv.1">
    <property type="organism name" value="mouse"/>
</dbReference>
<dbReference type="AGR" id="MGI:1889817"/>
<dbReference type="CTD" id="29803"/>
<dbReference type="MGI" id="MGI:1889817">
    <property type="gene designation" value="Repin1"/>
</dbReference>
<dbReference type="VEuPathDB" id="HostDB:ENSMUSG00000052751"/>
<dbReference type="eggNOG" id="KOG1721">
    <property type="taxonomic scope" value="Eukaryota"/>
</dbReference>
<dbReference type="GeneTree" id="ENSGT00940000162588"/>
<dbReference type="HOGENOM" id="CLU_002678_36_0_1"/>
<dbReference type="InParanoid" id="Q5U4E2"/>
<dbReference type="OrthoDB" id="654211at2759"/>
<dbReference type="PhylomeDB" id="Q5U4E2"/>
<dbReference type="TreeFam" id="TF326846"/>
<dbReference type="BioGRID-ORCS" id="58887">
    <property type="hits" value="4 hits in 79 CRISPR screens"/>
</dbReference>
<dbReference type="ChiTaRS" id="Repin1">
    <property type="organism name" value="mouse"/>
</dbReference>
<dbReference type="PRO" id="PR:Q5U4E2"/>
<dbReference type="Proteomes" id="UP000000589">
    <property type="component" value="Chromosome 6"/>
</dbReference>
<dbReference type="RNAct" id="Q5U4E2">
    <property type="molecule type" value="protein"/>
</dbReference>
<dbReference type="Bgee" id="ENSMUSG00000052751">
    <property type="expression patterns" value="Expressed in ascending aorta and 259 other cell types or tissues"/>
</dbReference>
<dbReference type="ExpressionAtlas" id="Q5U4E2">
    <property type="expression patterns" value="baseline and differential"/>
</dbReference>
<dbReference type="GO" id="GO:0005829">
    <property type="term" value="C:cytosol"/>
    <property type="evidence" value="ECO:0000314"/>
    <property type="project" value="MGI"/>
</dbReference>
<dbReference type="GO" id="GO:0022626">
    <property type="term" value="C:cytosolic ribosome"/>
    <property type="evidence" value="ECO:0000314"/>
    <property type="project" value="MGI"/>
</dbReference>
<dbReference type="GO" id="GO:0005811">
    <property type="term" value="C:lipid droplet"/>
    <property type="evidence" value="ECO:0000314"/>
    <property type="project" value="MGI"/>
</dbReference>
<dbReference type="GO" id="GO:0031965">
    <property type="term" value="C:nuclear membrane"/>
    <property type="evidence" value="ECO:0000314"/>
    <property type="project" value="MGI"/>
</dbReference>
<dbReference type="GO" id="GO:0043565">
    <property type="term" value="F:sequence-specific DNA binding"/>
    <property type="evidence" value="ECO:0000250"/>
    <property type="project" value="UniProtKB"/>
</dbReference>
<dbReference type="GO" id="GO:0008270">
    <property type="term" value="F:zinc ion binding"/>
    <property type="evidence" value="ECO:0007669"/>
    <property type="project" value="UniProtKB-KW"/>
</dbReference>
<dbReference type="GO" id="GO:0046326">
    <property type="term" value="P:positive regulation of D-glucose import"/>
    <property type="evidence" value="ECO:0000315"/>
    <property type="project" value="MGI"/>
</dbReference>
<dbReference type="GO" id="GO:2000191">
    <property type="term" value="P:regulation of fatty acid transport"/>
    <property type="evidence" value="ECO:0000315"/>
    <property type="project" value="UniProtKB"/>
</dbReference>
<dbReference type="GO" id="GO:0006357">
    <property type="term" value="P:regulation of transcription by RNA polymerase II"/>
    <property type="evidence" value="ECO:0000315"/>
    <property type="project" value="UniProtKB"/>
</dbReference>
<dbReference type="FunFam" id="3.30.160.60:FF:000214">
    <property type="entry name" value="replication initiator 1 isoform X1"/>
    <property type="match status" value="4"/>
</dbReference>
<dbReference type="FunFam" id="3.30.160.60:FF:000823">
    <property type="entry name" value="replication initiator 1 isoform X1"/>
    <property type="match status" value="1"/>
</dbReference>
<dbReference type="FunFam" id="3.30.160.60:FF:001048">
    <property type="entry name" value="replication initiator 1 isoform X1"/>
    <property type="match status" value="1"/>
</dbReference>
<dbReference type="FunFam" id="3.30.160.60:FF:001367">
    <property type="entry name" value="replication initiator 1 isoform X1"/>
    <property type="match status" value="1"/>
</dbReference>
<dbReference type="FunFam" id="3.30.160.60:FF:001422">
    <property type="entry name" value="replication initiator 1 isoform X1"/>
    <property type="match status" value="1"/>
</dbReference>
<dbReference type="FunFam" id="3.30.160.60:FF:000750">
    <property type="entry name" value="replication initiator 1 isoform X2"/>
    <property type="match status" value="1"/>
</dbReference>
<dbReference type="FunFam" id="3.30.160.60:FF:000269">
    <property type="entry name" value="Zinc finger protein 287"/>
    <property type="match status" value="1"/>
</dbReference>
<dbReference type="Gene3D" id="3.30.160.60">
    <property type="entry name" value="Classic Zinc Finger"/>
    <property type="match status" value="12"/>
</dbReference>
<dbReference type="InterPro" id="IPR036236">
    <property type="entry name" value="Znf_C2H2_sf"/>
</dbReference>
<dbReference type="InterPro" id="IPR013087">
    <property type="entry name" value="Znf_C2H2_type"/>
</dbReference>
<dbReference type="PANTHER" id="PTHR24390:SF79">
    <property type="entry name" value="ASPARAGINE-RICH ZINC FINGER PROTEIN AZF1"/>
    <property type="match status" value="1"/>
</dbReference>
<dbReference type="PANTHER" id="PTHR24390">
    <property type="entry name" value="ZINC FINGER PROTEIN"/>
    <property type="match status" value="1"/>
</dbReference>
<dbReference type="Pfam" id="PF00096">
    <property type="entry name" value="zf-C2H2"/>
    <property type="match status" value="12"/>
</dbReference>
<dbReference type="SMART" id="SM00355">
    <property type="entry name" value="ZnF_C2H2"/>
    <property type="match status" value="15"/>
</dbReference>
<dbReference type="SUPFAM" id="SSF57667">
    <property type="entry name" value="beta-beta-alpha zinc fingers"/>
    <property type="match status" value="9"/>
</dbReference>
<dbReference type="PROSITE" id="PS00028">
    <property type="entry name" value="ZINC_FINGER_C2H2_1"/>
    <property type="match status" value="13"/>
</dbReference>
<dbReference type="PROSITE" id="PS50157">
    <property type="entry name" value="ZINC_FINGER_C2H2_2"/>
    <property type="match status" value="14"/>
</dbReference>
<feature type="chain" id="PRO_0000274913" description="DNA-binding protein REPIN1">
    <location>
        <begin position="1"/>
        <end position="545"/>
    </location>
</feature>
<feature type="zinc finger region" description="C2H2-type 1; atypical" evidence="2">
    <location>
        <begin position="52"/>
        <end position="74"/>
    </location>
</feature>
<feature type="zinc finger region" description="C2H2-type 2" evidence="2">
    <location>
        <begin position="80"/>
        <end position="102"/>
    </location>
</feature>
<feature type="zinc finger region" description="C2H2-type 3" evidence="2">
    <location>
        <begin position="111"/>
        <end position="133"/>
    </location>
</feature>
<feature type="zinc finger region" description="C2H2-type 4; atypical" evidence="2">
    <location>
        <begin position="140"/>
        <end position="162"/>
    </location>
</feature>
<feature type="zinc finger region" description="C2H2-type 5" evidence="2">
    <location>
        <begin position="172"/>
        <end position="194"/>
    </location>
</feature>
<feature type="zinc finger region" description="C2H2-type 6" evidence="2">
    <location>
        <begin position="229"/>
        <end position="251"/>
    </location>
</feature>
<feature type="zinc finger region" description="C2H2-type 7" evidence="2">
    <location>
        <begin position="257"/>
        <end position="279"/>
    </location>
</feature>
<feature type="zinc finger region" description="C2H2-type 8" evidence="2">
    <location>
        <begin position="285"/>
        <end position="307"/>
    </location>
</feature>
<feature type="zinc finger region" description="C2H2-type 9" evidence="2">
    <location>
        <begin position="353"/>
        <end position="375"/>
    </location>
</feature>
<feature type="zinc finger region" description="C2H2-type 10" evidence="2">
    <location>
        <begin position="381"/>
        <end position="403"/>
    </location>
</feature>
<feature type="zinc finger region" description="C2H2-type 11" evidence="2">
    <location>
        <begin position="409"/>
        <end position="431"/>
    </location>
</feature>
<feature type="zinc finger region" description="C2H2-type 12" evidence="2">
    <location>
        <begin position="437"/>
        <end position="459"/>
    </location>
</feature>
<feature type="zinc finger region" description="C2H2-type 13" evidence="2">
    <location>
        <begin position="465"/>
        <end position="487"/>
    </location>
</feature>
<feature type="zinc finger region" description="C2H2-type 14" evidence="2">
    <location>
        <begin position="493"/>
        <end position="515"/>
    </location>
</feature>
<feature type="zinc finger region" description="C2H2-type 15" evidence="2">
    <location>
        <begin position="521"/>
        <end position="543"/>
    </location>
</feature>
<feature type="region of interest" description="Disordered" evidence="3">
    <location>
        <begin position="1"/>
        <end position="50"/>
    </location>
</feature>
<feature type="modified residue" description="Phosphoserine" evidence="1">
    <location>
        <position position="27"/>
    </location>
</feature>
<feature type="modified residue" description="N6-acetyllysine" evidence="12">
    <location>
        <position position="39"/>
    </location>
</feature>
<feature type="modified residue" description="N6-acetyllysine" evidence="1">
    <location>
        <position position="269"/>
    </location>
</feature>
<feature type="sequence conflict" description="In Ref. 1; BAC40716." evidence="11" ref="1">
    <original>G</original>
    <variation>R</variation>
    <location>
        <position position="33"/>
    </location>
</feature>
<feature type="sequence conflict" description="In Ref. 1; BAC40716." evidence="11" ref="1">
    <original>L</original>
    <variation>Q</variation>
    <location>
        <position position="339"/>
    </location>
</feature>
<sequence length="545" mass="61830">MLEQRCRGPTAMGPAQPWLFSGPSQESSQPDRGLRYQGKSAQPRGQTPGKVHRCAHCRKRFPGWVALWLHARRCQARLPLPCHECNQRFRHAPFLALHLQVHASAVPDLGFICHLCGHSFRGWVALVLHLRAHSASKRPITCPECDRRFWRQKQLRAHLRRCQPPVPEARPFICGNCGRSFAQWDQLVVHKRVHVAEALEEAAAKALGPRPRGRPAAPRPGGDAVDRPFQCACCGKRFRHKPNLIAHRRVHTGERPHQCPECGKRFTNKPYLTSHRRIHTGEKPYPCTECGRRFRHKPNLLSHSKIHKRLEVSAQAAPHPESHQIAAEPMAQPALGVPLGSPRTPAEAPALLHSCSDCGRSFRLERFLRLHQRQHTGERPFACTECGKNFGKKTHLVAHSRVHSGERPFACEECGRRFSQGSHLAAHRRDHAPERPFVCPDCGKAFRHKPYLAAHRRIHTGEKPYVCPDCGKAFSQKSNLVSHRRIHTGERPYACPDCDRSFSQKSNLITHRKSHIRDGAFCCAICGQTFDDEDRLLMHQKKHDA</sequence>
<organism>
    <name type="scientific">Mus musculus</name>
    <name type="common">Mouse</name>
    <dbReference type="NCBI Taxonomy" id="10090"/>
    <lineage>
        <taxon>Eukaryota</taxon>
        <taxon>Metazoa</taxon>
        <taxon>Chordata</taxon>
        <taxon>Craniata</taxon>
        <taxon>Vertebrata</taxon>
        <taxon>Euteleostomi</taxon>
        <taxon>Mammalia</taxon>
        <taxon>Eutheria</taxon>
        <taxon>Euarchontoglires</taxon>
        <taxon>Glires</taxon>
        <taxon>Rodentia</taxon>
        <taxon>Myomorpha</taxon>
        <taxon>Muroidea</taxon>
        <taxon>Muridae</taxon>
        <taxon>Murinae</taxon>
        <taxon>Mus</taxon>
        <taxon>Mus</taxon>
    </lineage>
</organism>
<keyword id="KW-0007">Acetylation</keyword>
<keyword id="KW-0963">Cytoplasm</keyword>
<keyword id="KW-0238">DNA-binding</keyword>
<keyword id="KW-0479">Metal-binding</keyword>
<keyword id="KW-0539">Nucleus</keyword>
<keyword id="KW-0597">Phosphoprotein</keyword>
<keyword id="KW-1185">Reference proteome</keyword>
<keyword id="KW-0677">Repeat</keyword>
<keyword id="KW-0862">Zinc</keyword>
<keyword id="KW-0863">Zinc-finger</keyword>
<accession>Q5U4E2</accession>
<accession>Q8BTQ5</accession>
<protein>
    <recommendedName>
        <fullName evidence="11">DNA-binding protein REPIN1</fullName>
    </recommendedName>
    <alternativeName>
        <fullName>Zinc finger protein 464</fullName>
        <shortName>Zfp-464</shortName>
    </alternativeName>
</protein>